<feature type="chain" id="PRO_1000149898" description="5'-deoxynucleotidase VS_2195">
    <location>
        <begin position="1"/>
        <end position="194"/>
    </location>
</feature>
<feature type="domain" description="HD" evidence="2">
    <location>
        <begin position="30"/>
        <end position="142"/>
    </location>
</feature>
<feature type="binding site" evidence="1">
    <location>
        <begin position="18"/>
        <end position="19"/>
    </location>
    <ligand>
        <name>substrate</name>
    </ligand>
</feature>
<feature type="binding site" evidence="1">
    <location>
        <position position="33"/>
    </location>
    <ligand>
        <name>a divalent metal cation</name>
        <dbReference type="ChEBI" id="CHEBI:60240"/>
    </ligand>
</feature>
<feature type="binding site" evidence="1">
    <location>
        <position position="33"/>
    </location>
    <ligand>
        <name>substrate</name>
    </ligand>
</feature>
<feature type="binding site" evidence="1">
    <location>
        <position position="68"/>
    </location>
    <ligand>
        <name>a divalent metal cation</name>
        <dbReference type="ChEBI" id="CHEBI:60240"/>
    </ligand>
</feature>
<feature type="binding site" evidence="1">
    <location>
        <position position="69"/>
    </location>
    <ligand>
        <name>a divalent metal cation</name>
        <dbReference type="ChEBI" id="CHEBI:60240"/>
    </ligand>
</feature>
<feature type="binding site" evidence="1">
    <location>
        <position position="69"/>
    </location>
    <ligand>
        <name>substrate</name>
    </ligand>
</feature>
<feature type="binding site" evidence="1">
    <location>
        <begin position="77"/>
        <end position="80"/>
    </location>
    <ligand>
        <name>substrate</name>
    </ligand>
</feature>
<feature type="binding site" evidence="1">
    <location>
        <position position="137"/>
    </location>
    <ligand>
        <name>a divalent metal cation</name>
        <dbReference type="ChEBI" id="CHEBI:60240"/>
    </ligand>
</feature>
<feature type="binding site" evidence="1">
    <location>
        <position position="137"/>
    </location>
    <ligand>
        <name>substrate</name>
    </ligand>
</feature>
<feature type="site" description="Appears to be important in orienting the phosphate for catalysis" evidence="1">
    <location>
        <position position="18"/>
    </location>
</feature>
<proteinExistence type="inferred from homology"/>
<protein>
    <recommendedName>
        <fullName evidence="1">5'-deoxynucleotidase VS_2195</fullName>
        <ecNumber evidence="1">3.1.3.89</ecNumber>
    </recommendedName>
    <alternativeName>
        <fullName evidence="1">5'-deoxyribonucleotidase</fullName>
    </alternativeName>
    <alternativeName>
        <fullName evidence="1">Nucleoside 5'-monophosphate phosphohydrolase</fullName>
    </alternativeName>
</protein>
<comment type="function">
    <text evidence="1">Catalyzes the strictly specific dephosphorylation of 2'-deoxyribonucleoside 5'-monophosphates.</text>
</comment>
<comment type="catalytic activity">
    <reaction evidence="1">
        <text>a 2'-deoxyribonucleoside 5'-phosphate + H2O = a 2'-deoxyribonucleoside + phosphate</text>
        <dbReference type="Rhea" id="RHEA:36167"/>
        <dbReference type="ChEBI" id="CHEBI:15377"/>
        <dbReference type="ChEBI" id="CHEBI:18274"/>
        <dbReference type="ChEBI" id="CHEBI:43474"/>
        <dbReference type="ChEBI" id="CHEBI:65317"/>
        <dbReference type="EC" id="3.1.3.89"/>
    </reaction>
</comment>
<comment type="cofactor">
    <cofactor evidence="1">
        <name>a divalent metal cation</name>
        <dbReference type="ChEBI" id="CHEBI:60240"/>
    </cofactor>
</comment>
<comment type="subunit">
    <text evidence="1">Homodimer.</text>
</comment>
<comment type="subcellular location">
    <subcellularLocation>
        <location evidence="1">Cytoplasm</location>
    </subcellularLocation>
</comment>
<comment type="similarity">
    <text evidence="1">Belongs to the 5DNU family.</text>
</comment>
<gene>
    <name type="ordered locus">VS_2195</name>
</gene>
<evidence type="ECO:0000255" key="1">
    <source>
        <dbReference type="HAMAP-Rule" id="MF_01100"/>
    </source>
</evidence>
<evidence type="ECO:0000255" key="2">
    <source>
        <dbReference type="PROSITE-ProRule" id="PRU01175"/>
    </source>
</evidence>
<organism>
    <name type="scientific">Vibrio atlanticus (strain LGP32)</name>
    <name type="common">Vibrio splendidus (strain Mel32)</name>
    <dbReference type="NCBI Taxonomy" id="575788"/>
    <lineage>
        <taxon>Bacteria</taxon>
        <taxon>Pseudomonadati</taxon>
        <taxon>Pseudomonadota</taxon>
        <taxon>Gammaproteobacteria</taxon>
        <taxon>Vibrionales</taxon>
        <taxon>Vibrionaceae</taxon>
        <taxon>Vibrio</taxon>
    </lineage>
</organism>
<name>5DNU_VIBA3</name>
<keyword id="KW-0963">Cytoplasm</keyword>
<keyword id="KW-0378">Hydrolase</keyword>
<keyword id="KW-0479">Metal-binding</keyword>
<keyword id="KW-0547">Nucleotide-binding</keyword>
<dbReference type="EC" id="3.1.3.89" evidence="1"/>
<dbReference type="EMBL" id="FM954972">
    <property type="protein sequence ID" value="CAV19361.1"/>
    <property type="molecule type" value="Genomic_DNA"/>
</dbReference>
<dbReference type="SMR" id="B7VHZ1"/>
<dbReference type="STRING" id="575788.VS_2195"/>
<dbReference type="KEGG" id="vsp:VS_2195"/>
<dbReference type="PATRIC" id="fig|575788.5.peg.3460"/>
<dbReference type="eggNOG" id="COG1896">
    <property type="taxonomic scope" value="Bacteria"/>
</dbReference>
<dbReference type="HOGENOM" id="CLU_084784_0_0_6"/>
<dbReference type="Proteomes" id="UP000009100">
    <property type="component" value="Chromosome 1"/>
</dbReference>
<dbReference type="GO" id="GO:0005737">
    <property type="term" value="C:cytoplasm"/>
    <property type="evidence" value="ECO:0007669"/>
    <property type="project" value="UniProtKB-SubCell"/>
</dbReference>
<dbReference type="GO" id="GO:0002953">
    <property type="term" value="F:5'-deoxynucleotidase activity"/>
    <property type="evidence" value="ECO:0007669"/>
    <property type="project" value="UniProtKB-EC"/>
</dbReference>
<dbReference type="GO" id="GO:0046872">
    <property type="term" value="F:metal ion binding"/>
    <property type="evidence" value="ECO:0007669"/>
    <property type="project" value="UniProtKB-KW"/>
</dbReference>
<dbReference type="GO" id="GO:0000166">
    <property type="term" value="F:nucleotide binding"/>
    <property type="evidence" value="ECO:0007669"/>
    <property type="project" value="UniProtKB-KW"/>
</dbReference>
<dbReference type="CDD" id="cd00077">
    <property type="entry name" value="HDc"/>
    <property type="match status" value="1"/>
</dbReference>
<dbReference type="FunFam" id="1.10.3210.10:FF:000002">
    <property type="entry name" value="Nucleotidase YfbR"/>
    <property type="match status" value="1"/>
</dbReference>
<dbReference type="Gene3D" id="1.10.3210.10">
    <property type="entry name" value="Hypothetical protein af1432"/>
    <property type="match status" value="1"/>
</dbReference>
<dbReference type="HAMAP" id="MF_01100">
    <property type="entry name" value="5DNU"/>
    <property type="match status" value="1"/>
</dbReference>
<dbReference type="InterPro" id="IPR003607">
    <property type="entry name" value="HD/PDEase_dom"/>
</dbReference>
<dbReference type="InterPro" id="IPR006674">
    <property type="entry name" value="HD_domain"/>
</dbReference>
<dbReference type="InterPro" id="IPR022971">
    <property type="entry name" value="YfbR"/>
</dbReference>
<dbReference type="InterPro" id="IPR039356">
    <property type="entry name" value="YfbR/HDDC2"/>
</dbReference>
<dbReference type="NCBIfam" id="NF003009">
    <property type="entry name" value="PRK03826.1"/>
    <property type="match status" value="1"/>
</dbReference>
<dbReference type="PANTHER" id="PTHR11845">
    <property type="entry name" value="5'-DEOXYNUCLEOTIDASE HDDC2"/>
    <property type="match status" value="1"/>
</dbReference>
<dbReference type="PANTHER" id="PTHR11845:SF13">
    <property type="entry name" value="5'-DEOXYNUCLEOTIDASE HDDC2"/>
    <property type="match status" value="1"/>
</dbReference>
<dbReference type="Pfam" id="PF12917">
    <property type="entry name" value="YfbR-like"/>
    <property type="match status" value="1"/>
</dbReference>
<dbReference type="SMART" id="SM00471">
    <property type="entry name" value="HDc"/>
    <property type="match status" value="1"/>
</dbReference>
<dbReference type="SUPFAM" id="SSF109604">
    <property type="entry name" value="HD-domain/PDEase-like"/>
    <property type="match status" value="1"/>
</dbReference>
<dbReference type="PROSITE" id="PS51831">
    <property type="entry name" value="HD"/>
    <property type="match status" value="1"/>
</dbReference>
<accession>B7VHZ1</accession>
<sequence>MKQSHFFAHLARMKLIQRWPLMRSVSSENISEHSLQVAFVAHALALIKNKKFDGKLNPEHIALLGMYHDTSEVLTGDLPTPVKYYNPDIAQEYKKIEAAAEQRLLSMLPEEFRDDFSPFLISGTANKEEQSIVKQADTICAYLKCLEELSAGNHEYEQAKRRLEETLEQRKSPEMDYFLTTFAPSFELSLDEIS</sequence>
<reference key="1">
    <citation type="submission" date="2009-02" db="EMBL/GenBank/DDBJ databases">
        <title>Vibrio splendidus str. LGP32 complete genome.</title>
        <authorList>
            <person name="Mazel D."/>
            <person name="Le Roux F."/>
        </authorList>
    </citation>
    <scope>NUCLEOTIDE SEQUENCE [LARGE SCALE GENOMIC DNA]</scope>
    <source>
        <strain>LGP32</strain>
    </source>
</reference>